<evidence type="ECO:0000250" key="1">
    <source>
        <dbReference type="UniProtKB" id="E9PZ36"/>
    </source>
</evidence>
<evidence type="ECO:0000250" key="2">
    <source>
        <dbReference type="UniProtKB" id="P08F94"/>
    </source>
</evidence>
<evidence type="ECO:0000255" key="3"/>
<evidence type="ECO:0000255" key="4">
    <source>
        <dbReference type="PROSITE-ProRule" id="PRU00498"/>
    </source>
</evidence>
<evidence type="ECO:0000255" key="5">
    <source>
        <dbReference type="PROSITE-ProRule" id="PRU00817"/>
    </source>
</evidence>
<evidence type="ECO:0000255" key="6">
    <source>
        <dbReference type="PROSITE-ProRule" id="PRU01164"/>
    </source>
</evidence>
<evidence type="ECO:0000256" key="7">
    <source>
        <dbReference type="SAM" id="MobiDB-lite"/>
    </source>
</evidence>
<evidence type="ECO:0000269" key="8">
    <source>
    </source>
</evidence>
<evidence type="ECO:0000269" key="9">
    <source>
    </source>
</evidence>
<sequence>MIVWLISLMSIEILLLAGPALSFHIEPKEGSLAGGTWITVIFDGLELEQLYPTNGSQLEIHLVNVAVPALPSIPCDVSPVFLDLPVVMCRTRSLLPEVHEGLYYLEAHAGGQVVGSPSPGLQDCCTFKFSREQTPIVYQVTPPSGVPGKMIHVYGWIITGRSETFDFDAEYIDSPLILEAQGDKWVTACSLINRQTGSCYPLQENHGLGTLQCRVEGNYIGSQNVSFSVFNKGKSMVHKNAWLVSAKLDLFLYQTYSEILSVFPETGSLGGKTDIIITGDFFDNPALVTIAGVPCDIRHMSPRKIECTTRAPGKRARLTAPQAGNRGLLFEVGEAVEGLDLTVATPGYRWQIVPNASSPFGFWFKEGQPFRARLSGFFVAPETNNYTFWIQADNQASLYFSQSEDPRMKVKVASIRVGTADWFDAWEQDRNEGVWQRKTPKLELVGGTRYYLEAEHYGRTPSRGMRIGVQIHNTWLNPDVVSTYLREKHQIRVRAQRLPEIQMLTVSGRGSFFLTWDNVTSQPIPENATAHQIQTAIEELLAVKCKLEPLSANILLWLGFEQGPEGSSFEGDLTSGTEPFCGRFSLHQPRRLVLTPPAAQKDYWLDRYTHLCIAYKGRMKNILKVTVFFTTDFQNFIKKNITCDWNLVGTRPNSWQFTCTDLWETCVHHSMYLQPPLVDSPVLVHRIDLFPLSQETSGFYVDEIIIADTNITVSQADSETAHPGGNLVESLCVVGSPPVYNISFWLVGCGQELPLITASIVPTGGEARRSGLVQVTTQRIQKTSPPLGGYFHIQLPTSVIPDVPVHISASHLRKLLQNNADNFTSRYLNSSDLTVMEDLKSCYEHEWTLSWSSQVGDLPNFIRVSDANLTGVNPAATVRVVYDGGVFLGPVFGDMLVTANQHTQVVVRVNDIPAHCSGSCSFQYLEGSTPQIHSAWYSLDGDISLLIYIFGINFSGDPQALEIMVNKTNCKVIFSNQTNVICQTDLLPVGMHRLFMVVRPFGRAINTSGEALFLSVEPRLDAVEPSRAAEIGGLWATIQGSGLEDVSLVLFGSQSCAINITTSNSRRIQCRVPPRGKDGPVVNLTVVSGDHSAVLPMAFTYVSSLNPVITSLSRNRSNIAGGDTLFIRMALLVNYTDLDVEVCIQNTLAPAHVQMPQGLEVVLPPLPAGLYSISVSINGISIRSPGVDLHIQYITEVFSIEPCCGSLLGGTILSISGIGFIRDPTLVWVFVGNRSCDILNSTETVIWCETPPAALLPDSNIPAIPVPMEIWAGNVSFARESLLNLSFTFLYEAAMTPVVTAMRGEIINNSLRFYVEGNNLSNSVILLGVSHCDLETQTLRNNVSLSGCSFPLHSLEAGFYPLQVRQKQMGFANMSAVPQQYVITPWIMAISPTHGSACGGTVLTVRGLALSSRKRSVQVDLLGPFTCVILSLGHQTILCQINKVNDSFPDVSFTLNVTVIVNGLPSECQGNCTLFLQEETTPIVDSLTTNISGSLTMVLIRGRKLGITAVEPMVFVDDHLPCIVTFFNASYVICWISDLTPGLHYVSVFHARNGYACFGNVSRHFYILPQVFHYFPKNFSIHGGSLLTVEGTALRGKNSTLVYVGQQACLTVSISTELIQCIVPAGNGSVGLVIEVDGLSYQMGVIGYSSAFTPRLLSISQTDDVLTFAVAQVSGAENVDIFIGMSPCVGISGNHTVLQCVVSSLPAGEYPVRGYDRMRGWASSVLVFTSTATISGVTENFGCLGGRLVHVFGAGFSPGNVSAAVCGAPCQVLANATVSAFSCLVLPLNVSLAFLCGLKHSEESCEASSSTYVQCDLTVTVGTETLPQSWPYLYICEESPQCLFAPDHWTESTFPWFSGLFISPKVERDEVLIYNSSCNIAMETEAKMECETPNQPITAKITEIRKSRGQSTQGNFSLQFCLRWSRTHSWFPERVPQDGDNVTVENGQLLLLDTNTSILNLLHIKGGKLIFMDPGPIELRAHAILISDGGELRIGSEDKPFQGKAEIKLYGSSHSTPFFPYGVKFLAVRNGTLSLHGLLPEVTFTHLQAAAYAGDTVLALEDAVDWHPGDEAVIISRIGVGGAKPMEEIVIVEAVHNTDLYLRSPLRYSHNFTENWVAGVLHILKVTVVLLSRSITIQGNLTAERMKHLASCQEASDSEGNLQDCLYSKSEKMLGSRDLGARVIVQSFPEEPSRVQLRGVQFRDLGQAFRKHVSALTLVGAMRDSYVQGCTVWSSFNRGLSMSMTLGLKVDSNIFYNILGHALLVGTDMDIKYISWEAAPEKKPDWSEQGNIIRNNVIISISGTEGLSSPEMLTPSGIYILNPTNVVEGNRVYVAGLGYFFHLVTSQTSQAPLLSFTQNIAHSCTRYGLFIYPQFQPPWDDGRGPTLFQNFTVWGSAGGARISRSSNLHLKNFQVYSCRDFGIDILESDANTSVTDSLLLGHFAHKGSLCMSAGIKTPKRWELIISNTTFVNFDLTDCVSIRTCSGCSRGQGGFTVKTNQLKFINSPNLVAFPFPHAAILEDLDGSLSGRNRSHILASMETLSASCLVNLSFSQIVPGSVCGEDVIFHHMSIGLANAPNVSYDLTITDSRNKTTTVNYVRDTLSNLYGWMALLLDQETYSLQFETPWISRSLQYSATFGSFAPGNYLLLVHTVLWPYPDILVRCGSQEGRSLPSLPLPGQDQGCDWFFNTQLRQLIYLVSGEGQVQVTLQVKEGVPPTISASTSAPESALKWSLPEAWTGIEEGWGGHNHTIPGPGDDILILPNRTVLVDTNLPFLKGLYVMGTLEFPVDRSNVLSVACMVIAGGELKVGTLDNPLEKEQKLLILLRASEGIFCDRLNGIHIDPGTIGVYGKVQLHGACPKKSWTRLAADIASGNERIIVEDAVDWRPHDKIVLSSSSYEPHEAEILTVKEVQAHHVKIYERLKYRHIGSVHVMEDGRCIRLAAEVGLLTRNIQIQPDISCRARLLVGSFRNSSSKEFSGVLQLSNVEIQNFGSPLYSSIEFTNASAGSWIISSSLHQSCSGGIRAAASHGIILNDNIVFGTVGHGIDLEGQNFSLSNNLVVLMTQSAWSTVWVAGIKANQAKDINLYGNVVAGSERIGFHIQGHRCSSPEARWSDNVAHSSLHGLHLYKENGLDNCTGISGFLAFKNFDYGAMLHVENSVEIENITLVDNSIGLLATVYVSSVPKSHIENVQIVLRNSVIIATSSSFDCIQDRVKPRSANLTSSDRAPSNPRGGRVGILWPIFTSEPNWWPQEPWHRVRNGHSTSGILKLQDVTFSNFVKSCYSDDLDICILPNVENTGIMHPIMAEGTRMLKIKDKNKFYFPPLQARKGLGILVCPESDCENPRKYLFKDLDGRALGLPPPVSVFPKTEAEWTGSFFNTGTFREEQKCTYRALIQGYICKQSDQAILILDNADATWAMQKLYPVVSVTRGFVDTFSSVNADAPCSTSGSASTFYSILPTREITKICFVDQTPQVLRFFLLGNRSTSKLLLAVFYHELQNPRVFIGESFIPPIMVQSTSSLLDESIGSNYFSILDNLLYVVLQGQEPIEIHSGVSIHLALTVMFSVLEKGWEIIILERLTDFLQVSQDQIRFIHEMPGNEATLKAIADNKAKRKRNCPTVTCASPYRVGQRRPLMTEMSSYRVPSPTIMETASKVIVIEIGDLPTIRSTRLISYLTSNKLQNLAHQIITAQQTGVLENVLNMTIGALLVTQPKGVTDYGNASSFKTGNFIYIRPYALSVLVQPSDGEVGKELTVQPRLVFLDKQNQRIESLGPPSEPWAISVSLEGTSDPVLKGCTQAESQDGYVSFSNLAVLISGSNWHFIFTVTSPPGANFTARSRSFTVLPAAPSEKSSIILAVSLCSVASWLALCCLVCCWFRKSKSRKIKSEDISEFKTNDQKSHIHMSSKHPRSQETKKEDTMMGEDMKIKVIMDKVNQLPHQSLNGVSRRKVSRRAVREEGSSREEDVVPAPRIISITSQGHTCVPGSPDQQIYLQEAGNWKEAQEQLVSYQLAGQDQRLLLCPDLRRERQQLQGQSQLGQEGGSVGLSQEKKASGGATQASCPHLVHPETIQEQL</sequence>
<dbReference type="EMBL" id="AAEX03008386">
    <property type="status" value="NOT_ANNOTATED_CDS"/>
    <property type="molecule type" value="Genomic_DNA"/>
</dbReference>
<dbReference type="EMBL" id="AAEX03008387">
    <property type="status" value="NOT_ANNOTATED_CDS"/>
    <property type="molecule type" value="Genomic_DNA"/>
</dbReference>
<dbReference type="EMBL" id="AAEX03008388">
    <property type="status" value="NOT_ANNOTATED_CDS"/>
    <property type="molecule type" value="Genomic_DNA"/>
</dbReference>
<dbReference type="RefSeq" id="XP_005627522.1">
    <property type="nucleotide sequence ID" value="XM_005627465.3"/>
</dbReference>
<dbReference type="CORUM" id="E2RK30"/>
<dbReference type="FunCoup" id="E2RK30">
    <property type="interactions" value="4"/>
</dbReference>
<dbReference type="STRING" id="9615.ENSCAFP00000003171"/>
<dbReference type="GlyCosmos" id="E2RK30">
    <property type="glycosylation" value="67 sites, No reported glycans"/>
</dbReference>
<dbReference type="PaxDb" id="9612-ENSCAFP00000003171"/>
<dbReference type="Ensembl" id="ENSCAFT00000003416.5">
    <property type="protein sequence ID" value="ENSCAFP00000003171.3"/>
    <property type="gene ID" value="ENSCAFG00000002165.5"/>
</dbReference>
<dbReference type="GeneID" id="474934"/>
<dbReference type="KEGG" id="cfa:474934"/>
<dbReference type="CTD" id="5314"/>
<dbReference type="VGNC" id="VGNC:44605">
    <property type="gene designation" value="PKHD1"/>
</dbReference>
<dbReference type="eggNOG" id="ENOG502QR85">
    <property type="taxonomic scope" value="Eukaryota"/>
</dbReference>
<dbReference type="HOGENOM" id="CLU_000057_1_0_1"/>
<dbReference type="InParanoid" id="E2RK30"/>
<dbReference type="OMA" id="NFMVWGS"/>
<dbReference type="OrthoDB" id="120976at2759"/>
<dbReference type="TreeFam" id="TF329582"/>
<dbReference type="Proteomes" id="UP000002254">
    <property type="component" value="Chromosome 12"/>
</dbReference>
<dbReference type="Proteomes" id="UP000694429">
    <property type="component" value="Unplaced"/>
</dbReference>
<dbReference type="Proteomes" id="UP000694542">
    <property type="component" value="Unplaced"/>
</dbReference>
<dbReference type="Proteomes" id="UP000805418">
    <property type="component" value="Unplaced"/>
</dbReference>
<dbReference type="Bgee" id="ENSCAFG00000002165">
    <property type="expression patterns" value="Expressed in adult mammalian kidney and 8 other cell types or tissues"/>
</dbReference>
<dbReference type="GO" id="GO:0016324">
    <property type="term" value="C:apical plasma membrane"/>
    <property type="evidence" value="ECO:0000250"/>
    <property type="project" value="UniProtKB"/>
</dbReference>
<dbReference type="GO" id="GO:0000775">
    <property type="term" value="C:chromosome, centromeric region"/>
    <property type="evidence" value="ECO:0007669"/>
    <property type="project" value="UniProtKB-SubCell"/>
</dbReference>
<dbReference type="GO" id="GO:0005929">
    <property type="term" value="C:cilium"/>
    <property type="evidence" value="ECO:0000250"/>
    <property type="project" value="UniProtKB"/>
</dbReference>
<dbReference type="GO" id="GO:0005783">
    <property type="term" value="C:endoplasmic reticulum"/>
    <property type="evidence" value="ECO:0000250"/>
    <property type="project" value="UniProtKB"/>
</dbReference>
<dbReference type="GO" id="GO:0070062">
    <property type="term" value="C:extracellular exosome"/>
    <property type="evidence" value="ECO:0000250"/>
    <property type="project" value="UniProtKB"/>
</dbReference>
<dbReference type="GO" id="GO:0005794">
    <property type="term" value="C:Golgi apparatus"/>
    <property type="evidence" value="ECO:0000250"/>
    <property type="project" value="UniProtKB"/>
</dbReference>
<dbReference type="GO" id="GO:0005634">
    <property type="term" value="C:nucleus"/>
    <property type="evidence" value="ECO:0007669"/>
    <property type="project" value="UniProtKB-SubCell"/>
</dbReference>
<dbReference type="GO" id="GO:0005819">
    <property type="term" value="C:spindle"/>
    <property type="evidence" value="ECO:0007669"/>
    <property type="project" value="UniProtKB-SubCell"/>
</dbReference>
<dbReference type="GO" id="GO:0048754">
    <property type="term" value="P:branching morphogenesis of an epithelial tube"/>
    <property type="evidence" value="ECO:0000250"/>
    <property type="project" value="UniProtKB"/>
</dbReference>
<dbReference type="GO" id="GO:0045216">
    <property type="term" value="P:cell-cell junction organization"/>
    <property type="evidence" value="ECO:0000250"/>
    <property type="project" value="UniProtKB"/>
</dbReference>
<dbReference type="GO" id="GO:0003382">
    <property type="term" value="P:epithelial cell morphogenesis"/>
    <property type="evidence" value="ECO:0000315"/>
    <property type="project" value="UniProtKB"/>
</dbReference>
<dbReference type="GO" id="GO:0051660">
    <property type="term" value="P:establishment of centrosome localization"/>
    <property type="evidence" value="ECO:0000315"/>
    <property type="project" value="UniProtKB"/>
</dbReference>
<dbReference type="GO" id="GO:0000132">
    <property type="term" value="P:establishment of mitotic spindle orientation"/>
    <property type="evidence" value="ECO:0000250"/>
    <property type="project" value="UniProtKB"/>
</dbReference>
<dbReference type="GO" id="GO:1904036">
    <property type="term" value="P:negative regulation of epithelial cell apoptotic process"/>
    <property type="evidence" value="ECO:0000250"/>
    <property type="project" value="UniProtKB"/>
</dbReference>
<dbReference type="GO" id="GO:0050679">
    <property type="term" value="P:positive regulation of epithelial cell proliferation"/>
    <property type="evidence" value="ECO:0000250"/>
    <property type="project" value="UniProtKB"/>
</dbReference>
<dbReference type="GO" id="GO:0030155">
    <property type="term" value="P:regulation of cell adhesion"/>
    <property type="evidence" value="ECO:0000315"/>
    <property type="project" value="UniProtKB"/>
</dbReference>
<dbReference type="GO" id="GO:0022407">
    <property type="term" value="P:regulation of cell-cell adhesion"/>
    <property type="evidence" value="ECO:0000315"/>
    <property type="project" value="UniProtKB"/>
</dbReference>
<dbReference type="GO" id="GO:0001952">
    <property type="term" value="P:regulation of cell-matrix adhesion"/>
    <property type="evidence" value="ECO:0000315"/>
    <property type="project" value="UniProtKB"/>
</dbReference>
<dbReference type="GO" id="GO:1904054">
    <property type="term" value="P:regulation of cholangiocyte proliferation"/>
    <property type="evidence" value="ECO:0000250"/>
    <property type="project" value="UniProtKB"/>
</dbReference>
<dbReference type="GO" id="GO:0090175">
    <property type="term" value="P:regulation of establishment of planar polarity"/>
    <property type="evidence" value="ECO:0000250"/>
    <property type="project" value="UniProtKB"/>
</dbReference>
<dbReference type="CDD" id="cd00603">
    <property type="entry name" value="IPT_PCSR"/>
    <property type="match status" value="5"/>
</dbReference>
<dbReference type="FunFam" id="2.60.40.10:FF:000889">
    <property type="entry name" value="fibrocystin isoform X1"/>
    <property type="match status" value="1"/>
</dbReference>
<dbReference type="FunFam" id="2.160.20.10:FF:000034">
    <property type="entry name" value="PKHD1, fibrocystin/polyductin"/>
    <property type="match status" value="1"/>
</dbReference>
<dbReference type="FunFam" id="2.160.20.10:FF:000133">
    <property type="entry name" value="PKHD1, fibrocystin/polyductin"/>
    <property type="match status" value="1"/>
</dbReference>
<dbReference type="FunFam" id="2.60.40.10:FF:000871">
    <property type="entry name" value="PKHD1, fibrocystin/polyductin"/>
    <property type="match status" value="1"/>
</dbReference>
<dbReference type="FunFam" id="2.60.40.10:FF:001171">
    <property type="entry name" value="PKHD1, fibrocystin/polyductin"/>
    <property type="match status" value="1"/>
</dbReference>
<dbReference type="FunFam" id="2.60.40.10:FF:001444">
    <property type="entry name" value="PKHD1, fibrocystin/polyductin"/>
    <property type="match status" value="1"/>
</dbReference>
<dbReference type="FunFam" id="2.60.40.10:FF:002082">
    <property type="entry name" value="PKHD1, fibrocystin/polyductin"/>
    <property type="match status" value="1"/>
</dbReference>
<dbReference type="Gene3D" id="2.60.40.10">
    <property type="entry name" value="Immunoglobulins"/>
    <property type="match status" value="5"/>
</dbReference>
<dbReference type="Gene3D" id="2.160.20.10">
    <property type="entry name" value="Single-stranded right-handed beta-helix, Pectin lyase-like"/>
    <property type="match status" value="2"/>
</dbReference>
<dbReference type="InterPro" id="IPR055401">
    <property type="entry name" value="CEMIP_beta-hel_dom"/>
</dbReference>
<dbReference type="InterPro" id="IPR052387">
    <property type="entry name" value="Fibrocystin"/>
</dbReference>
<dbReference type="InterPro" id="IPR019316">
    <property type="entry name" value="G8_domain"/>
</dbReference>
<dbReference type="InterPro" id="IPR013783">
    <property type="entry name" value="Ig-like_fold"/>
</dbReference>
<dbReference type="InterPro" id="IPR014756">
    <property type="entry name" value="Ig_E-set"/>
</dbReference>
<dbReference type="InterPro" id="IPR002909">
    <property type="entry name" value="IPT_dom"/>
</dbReference>
<dbReference type="InterPro" id="IPR037524">
    <property type="entry name" value="PA14/GLEYA"/>
</dbReference>
<dbReference type="InterPro" id="IPR006626">
    <property type="entry name" value="PbH1"/>
</dbReference>
<dbReference type="InterPro" id="IPR012334">
    <property type="entry name" value="Pectin_lyas_fold"/>
</dbReference>
<dbReference type="InterPro" id="IPR011050">
    <property type="entry name" value="Pectin_lyase_fold/virulence"/>
</dbReference>
<dbReference type="PANTHER" id="PTHR46769:SF1">
    <property type="entry name" value="FIBROCYSTIN"/>
    <property type="match status" value="1"/>
</dbReference>
<dbReference type="PANTHER" id="PTHR46769">
    <property type="entry name" value="POLYCYSTIC KIDNEY AND HEPATIC DISEASE 1 (AUTOSOMAL RECESSIVE)-LIKE 1"/>
    <property type="match status" value="1"/>
</dbReference>
<dbReference type="Pfam" id="PF24606">
    <property type="entry name" value="CEMIP_beta-hel"/>
    <property type="match status" value="1"/>
</dbReference>
<dbReference type="Pfam" id="PF10162">
    <property type="entry name" value="G8"/>
    <property type="match status" value="2"/>
</dbReference>
<dbReference type="Pfam" id="PF01833">
    <property type="entry name" value="TIG"/>
    <property type="match status" value="8"/>
</dbReference>
<dbReference type="SMART" id="SM01225">
    <property type="entry name" value="G8"/>
    <property type="match status" value="2"/>
</dbReference>
<dbReference type="SMART" id="SM00429">
    <property type="entry name" value="IPT"/>
    <property type="match status" value="5"/>
</dbReference>
<dbReference type="SMART" id="SM00710">
    <property type="entry name" value="PbH1"/>
    <property type="match status" value="9"/>
</dbReference>
<dbReference type="SUPFAM" id="SSF56988">
    <property type="entry name" value="Anthrax protective antigen"/>
    <property type="match status" value="1"/>
</dbReference>
<dbReference type="SUPFAM" id="SSF81296">
    <property type="entry name" value="E set domains"/>
    <property type="match status" value="6"/>
</dbReference>
<dbReference type="SUPFAM" id="SSF51126">
    <property type="entry name" value="Pectin lyase-like"/>
    <property type="match status" value="2"/>
</dbReference>
<dbReference type="PROSITE" id="PS51484">
    <property type="entry name" value="G8"/>
    <property type="match status" value="2"/>
</dbReference>
<dbReference type="PROSITE" id="PS51820">
    <property type="entry name" value="PA14"/>
    <property type="match status" value="1"/>
</dbReference>
<accession>E2RK30</accession>
<name>PKHD1_CANLF</name>
<organism>
    <name type="scientific">Canis lupus familiaris</name>
    <name type="common">Dog</name>
    <name type="synonym">Canis familiaris</name>
    <dbReference type="NCBI Taxonomy" id="9615"/>
    <lineage>
        <taxon>Eukaryota</taxon>
        <taxon>Metazoa</taxon>
        <taxon>Chordata</taxon>
        <taxon>Craniata</taxon>
        <taxon>Vertebrata</taxon>
        <taxon>Euteleostomi</taxon>
        <taxon>Mammalia</taxon>
        <taxon>Eutheria</taxon>
        <taxon>Laurasiatheria</taxon>
        <taxon>Carnivora</taxon>
        <taxon>Caniformia</taxon>
        <taxon>Canidae</taxon>
        <taxon>Canis</taxon>
    </lineage>
</organism>
<comment type="function">
    <text evidence="1 2 8 9">Promotes ciliogenesis in renal epithelial cells and therefore participates in the tubules formation and/ or ensures the maintenance of the architecture of the lumen of the kidney (By similarity). Has an impact on cellular symmetry by ensuring correct bipolar cell division through the regulation of centrosome duplication and mitotic spindle assembly and by maintaining oriented cell division (OCD) during tubular elongation through planar cell polarity (PCP) pathway (By similarity). During epithelial cell morphogenesis, it also regulates cell-cell and cell-matrix adhesion and participates in cell motility (PubMed:31398719, PubMed:32698519). Promotes cell-cell contact through the positive regulation of PTK2 kinase activity leading to either positive regulation of epithelial cell proliferation through the HRAS/RAF1 pathways, or negative regulation of apoptosis through the PDK1/AKT1 pathway (By similarity). May act in collecting-duct and biliary differentiation (By similarity). May participate in the regulation of the cholangiocytes proliferation and the CCN2 production in an CXCL8-dependent manner (By similarity).</text>
</comment>
<comment type="subunit">
    <text evidence="1">Interacts with CAMLG. Interacts with PKD2. Interacts (via CST) with ARF4; this interaction allows an efficient PKHD1 trafficking to the cilium. Interacts (via CST) with RAB8A; this interaction controls trafficking through the endomembrane systeme and to the cilium. Interacts (via CST) with TULP3; this interaction allows PKHD1 trafficking to the cilium.</text>
</comment>
<comment type="subcellular location">
    <subcellularLocation>
        <location evidence="2">Cell membrane</location>
        <topology evidence="3">Single-pass membrane protein</topology>
    </subcellularLocation>
    <subcellularLocation>
        <location evidence="2">Cytoplasm</location>
    </subcellularLocation>
    <subcellularLocation>
        <location evidence="1">Apical cell membrane</location>
    </subcellularLocation>
    <subcellularLocation>
        <location evidence="2">Cytoplasm</location>
        <location evidence="2">Cytoskeleton</location>
        <location evidence="2">Cilium basal body</location>
    </subcellularLocation>
    <subcellularLocation>
        <location evidence="1">Cell projection</location>
        <location evidence="1">Cilium</location>
    </subcellularLocation>
    <subcellularLocation>
        <location evidence="2">Cytoplasm</location>
        <location evidence="2">Cytoskeleton</location>
        <location evidence="2">Spindle</location>
    </subcellularLocation>
    <subcellularLocation>
        <location evidence="2">Chromosome</location>
        <location evidence="2">Centromere</location>
    </subcellularLocation>
    <subcellularLocation>
        <location evidence="1">Nucleus</location>
    </subcellularLocation>
    <subcellularLocation>
        <location evidence="1">Secreted</location>
        <location evidence="1">Extracellular exosome</location>
    </subcellularLocation>
    <subcellularLocation>
        <location evidence="1">Secreted</location>
    </subcellularLocation>
    <subcellularLocation>
        <location evidence="1">Endoplasmic reticulum</location>
    </subcellularLocation>
    <subcellularLocation>
        <location evidence="1">Golgi apparatus</location>
    </subcellularLocation>
    <text evidence="1">The intra-cellular C-terminal fragment (ICD) translocates to the nucleus and is not detected in primary cilia (By similarity). The extracellular domain (PECD) traffics beyond the mid-Golgi and localizes on exosome like vesicles (ELVs) attached to the primary cilium (By similarity). In the urine, the extracellular domain (PECD) exists as a highly abundant secreted form and a less abundant PECD form that is either tethered to or shed with the C-terminal fragment (PTM) in ELVs (By similarity). The majority of full length PKHD1 protein resides at the endoplasmic reticulum and cannot pass beyond the mid-Golgi apparatus and is not detected in primary cilia (By similarity). The intra-cellular C-terminal fragment of 21-kDa translocates to the nucleus. The extracellular domain traffics beyond the mid-Golgi and localizes on exosome like vesicles (ELVs) attached to the primary cilium (By similarity).</text>
</comment>
<comment type="PTM">
    <text evidence="1">Palmitoylated. Palmitoylation facilitates the trafficking to the cilia and membrane targeting.</text>
</comment>
<comment type="PTM">
    <text evidence="1">N-glycosylated.</text>
</comment>
<comment type="PTM">
    <text evidence="1">Several proteolytic cleavages occur within the extracellular domain, whereas at least one cleavage occurs within the cytoplasmic domain. Cleaved by a probable proprotein convertase which produces an extracellular domain (polyductin extracellular domain, (PECD)) and a C-terminal fragment (polyductin transmembrane fragment (PTM)) which are tethered together by disulfide bonds. This extracellular domain (PECD) is then shed from the primary cilium by activation of a member of the ADAM metalloproteinase disintegrins family, resulting in concomitant release of an intra-cellular C-terminal fragment (ICD) via a gamma-secretase-dependent process. The proteolytic cleavage of the C-terminal intracellular fragment (ICD) is controlled by cytosolic calcium concentration and activation of PKC.</text>
</comment>
<keyword id="KW-1003">Cell membrane</keyword>
<keyword id="KW-0966">Cell projection</keyword>
<keyword id="KW-0137">Centromere</keyword>
<keyword id="KW-0158">Chromosome</keyword>
<keyword id="KW-0963">Cytoplasm</keyword>
<keyword id="KW-0206">Cytoskeleton</keyword>
<keyword id="KW-0256">Endoplasmic reticulum</keyword>
<keyword id="KW-0325">Glycoprotein</keyword>
<keyword id="KW-0333">Golgi apparatus</keyword>
<keyword id="KW-0472">Membrane</keyword>
<keyword id="KW-0539">Nucleus</keyword>
<keyword id="KW-1185">Reference proteome</keyword>
<keyword id="KW-0677">Repeat</keyword>
<keyword id="KW-0964">Secreted</keyword>
<keyword id="KW-0732">Signal</keyword>
<keyword id="KW-0812">Transmembrane</keyword>
<keyword id="KW-1133">Transmembrane helix</keyword>
<proteinExistence type="inferred from homology"/>
<gene>
    <name evidence="2" type="primary">PKHD1</name>
</gene>
<reference key="1">
    <citation type="journal article" date="2005" name="Nature">
        <title>Genome sequence, comparative analysis and haplotype structure of the domestic dog.</title>
        <authorList>
            <person name="Lindblad-Toh K."/>
            <person name="Wade C.M."/>
            <person name="Mikkelsen T.S."/>
            <person name="Karlsson E.K."/>
            <person name="Jaffe D.B."/>
            <person name="Kamal M."/>
            <person name="Clamp M."/>
            <person name="Chang J.L."/>
            <person name="Kulbokas E.J. III"/>
            <person name="Zody M.C."/>
            <person name="Mauceli E."/>
            <person name="Xie X."/>
            <person name="Breen M."/>
            <person name="Wayne R.K."/>
            <person name="Ostrander E.A."/>
            <person name="Ponting C.P."/>
            <person name="Galibert F."/>
            <person name="Smith D.R."/>
            <person name="deJong P.J."/>
            <person name="Kirkness E.F."/>
            <person name="Alvarez P."/>
            <person name="Biagi T."/>
            <person name="Brockman W."/>
            <person name="Butler J."/>
            <person name="Chin C.-W."/>
            <person name="Cook A."/>
            <person name="Cuff J."/>
            <person name="Daly M.J."/>
            <person name="DeCaprio D."/>
            <person name="Gnerre S."/>
            <person name="Grabherr M."/>
            <person name="Kellis M."/>
            <person name="Kleber M."/>
            <person name="Bardeleben C."/>
            <person name="Goodstadt L."/>
            <person name="Heger A."/>
            <person name="Hitte C."/>
            <person name="Kim L."/>
            <person name="Koepfli K.-P."/>
            <person name="Parker H.G."/>
            <person name="Pollinger J.P."/>
            <person name="Searle S.M.J."/>
            <person name="Sutter N.B."/>
            <person name="Thomas R."/>
            <person name="Webber C."/>
            <person name="Baldwin J."/>
            <person name="Abebe A."/>
            <person name="Abouelleil A."/>
            <person name="Aftuck L."/>
            <person name="Ait-Zahra M."/>
            <person name="Aldredge T."/>
            <person name="Allen N."/>
            <person name="An P."/>
            <person name="Anderson S."/>
            <person name="Antoine C."/>
            <person name="Arachchi H."/>
            <person name="Aslam A."/>
            <person name="Ayotte L."/>
            <person name="Bachantsang P."/>
            <person name="Barry A."/>
            <person name="Bayul T."/>
            <person name="Benamara M."/>
            <person name="Berlin A."/>
            <person name="Bessette D."/>
            <person name="Blitshteyn B."/>
            <person name="Bloom T."/>
            <person name="Blye J."/>
            <person name="Boguslavskiy L."/>
            <person name="Bonnet C."/>
            <person name="Boukhgalter B."/>
            <person name="Brown A."/>
            <person name="Cahill P."/>
            <person name="Calixte N."/>
            <person name="Camarata J."/>
            <person name="Cheshatsang Y."/>
            <person name="Chu J."/>
            <person name="Citroen M."/>
            <person name="Collymore A."/>
            <person name="Cooke P."/>
            <person name="Dawoe T."/>
            <person name="Daza R."/>
            <person name="Decktor K."/>
            <person name="DeGray S."/>
            <person name="Dhargay N."/>
            <person name="Dooley K."/>
            <person name="Dooley K."/>
            <person name="Dorje P."/>
            <person name="Dorjee K."/>
            <person name="Dorris L."/>
            <person name="Duffey N."/>
            <person name="Dupes A."/>
            <person name="Egbiremolen O."/>
            <person name="Elong R."/>
            <person name="Falk J."/>
            <person name="Farina A."/>
            <person name="Faro S."/>
            <person name="Ferguson D."/>
            <person name="Ferreira P."/>
            <person name="Fisher S."/>
            <person name="FitzGerald M."/>
            <person name="Foley K."/>
            <person name="Foley C."/>
            <person name="Franke A."/>
            <person name="Friedrich D."/>
            <person name="Gage D."/>
            <person name="Garber M."/>
            <person name="Gearin G."/>
            <person name="Giannoukos G."/>
            <person name="Goode T."/>
            <person name="Goyette A."/>
            <person name="Graham J."/>
            <person name="Grandbois E."/>
            <person name="Gyaltsen K."/>
            <person name="Hafez N."/>
            <person name="Hagopian D."/>
            <person name="Hagos B."/>
            <person name="Hall J."/>
            <person name="Healy C."/>
            <person name="Hegarty R."/>
            <person name="Honan T."/>
            <person name="Horn A."/>
            <person name="Houde N."/>
            <person name="Hughes L."/>
            <person name="Hunnicutt L."/>
            <person name="Husby M."/>
            <person name="Jester B."/>
            <person name="Jones C."/>
            <person name="Kamat A."/>
            <person name="Kanga B."/>
            <person name="Kells C."/>
            <person name="Khazanovich D."/>
            <person name="Kieu A.C."/>
            <person name="Kisner P."/>
            <person name="Kumar M."/>
            <person name="Lance K."/>
            <person name="Landers T."/>
            <person name="Lara M."/>
            <person name="Lee W."/>
            <person name="Leger J.-P."/>
            <person name="Lennon N."/>
            <person name="Leuper L."/>
            <person name="LeVine S."/>
            <person name="Liu J."/>
            <person name="Liu X."/>
            <person name="Lokyitsang Y."/>
            <person name="Lokyitsang T."/>
            <person name="Lui A."/>
            <person name="Macdonald J."/>
            <person name="Major J."/>
            <person name="Marabella R."/>
            <person name="Maru K."/>
            <person name="Matthews C."/>
            <person name="McDonough S."/>
            <person name="Mehta T."/>
            <person name="Meldrim J."/>
            <person name="Melnikov A."/>
            <person name="Meneus L."/>
            <person name="Mihalev A."/>
            <person name="Mihova T."/>
            <person name="Miller K."/>
            <person name="Mittelman R."/>
            <person name="Mlenga V."/>
            <person name="Mulrain L."/>
            <person name="Munson G."/>
            <person name="Navidi A."/>
            <person name="Naylor J."/>
            <person name="Nguyen T."/>
            <person name="Nguyen N."/>
            <person name="Nguyen C."/>
            <person name="Nguyen T."/>
            <person name="Nicol R."/>
            <person name="Norbu N."/>
            <person name="Norbu C."/>
            <person name="Novod N."/>
            <person name="Nyima T."/>
            <person name="Olandt P."/>
            <person name="O'Neill B."/>
            <person name="O'Neill K."/>
            <person name="Osman S."/>
            <person name="Oyono L."/>
            <person name="Patti C."/>
            <person name="Perrin D."/>
            <person name="Phunkhang P."/>
            <person name="Pierre F."/>
            <person name="Priest M."/>
            <person name="Rachupka A."/>
            <person name="Raghuraman S."/>
            <person name="Rameau R."/>
            <person name="Ray V."/>
            <person name="Raymond C."/>
            <person name="Rege F."/>
            <person name="Rise C."/>
            <person name="Rogers J."/>
            <person name="Rogov P."/>
            <person name="Sahalie J."/>
            <person name="Settipalli S."/>
            <person name="Sharpe T."/>
            <person name="Shea T."/>
            <person name="Sheehan M."/>
            <person name="Sherpa N."/>
            <person name="Shi J."/>
            <person name="Shih D."/>
            <person name="Sloan J."/>
            <person name="Smith C."/>
            <person name="Sparrow T."/>
            <person name="Stalker J."/>
            <person name="Stange-Thomann N."/>
            <person name="Stavropoulos S."/>
            <person name="Stone C."/>
            <person name="Stone S."/>
            <person name="Sykes S."/>
            <person name="Tchuinga P."/>
            <person name="Tenzing P."/>
            <person name="Tesfaye S."/>
            <person name="Thoulutsang D."/>
            <person name="Thoulutsang Y."/>
            <person name="Topham K."/>
            <person name="Topping I."/>
            <person name="Tsamla T."/>
            <person name="Vassiliev H."/>
            <person name="Venkataraman V."/>
            <person name="Vo A."/>
            <person name="Wangchuk T."/>
            <person name="Wangdi T."/>
            <person name="Weiand M."/>
            <person name="Wilkinson J."/>
            <person name="Wilson A."/>
            <person name="Yadav S."/>
            <person name="Yang S."/>
            <person name="Yang X."/>
            <person name="Young G."/>
            <person name="Yu Q."/>
            <person name="Zainoun J."/>
            <person name="Zembek L."/>
            <person name="Zimmer A."/>
            <person name="Lander E.S."/>
        </authorList>
    </citation>
    <scope>NUCLEOTIDE SEQUENCE [LARGE SCALE GENOMIC DNA]</scope>
    <source>
        <strain>Boxer</strain>
    </source>
</reference>
<reference key="2">
    <citation type="journal article" date="2019" name="Phys. Biol.">
        <title>The transmembrane protein fibrocystin/polyductin regulates cell mechanics and cell motility.</title>
        <authorList>
            <person name="Puder S."/>
            <person name="Fischer T."/>
            <person name="Mierke C.T."/>
        </authorList>
    </citation>
    <scope>FUNCTION</scope>
</reference>
<reference key="3">
    <citation type="journal article" date="2020" name="Int. J. Mol. Sci.">
        <title>Fibrocystin Is Essential to Cellular Control of Adhesion and Epithelial Morphogenesis.</title>
        <authorList>
            <person name="Ziegler W.H."/>
            <person name="Soetje B."/>
            <person name="Marten L.P."/>
            <person name="Wiese J."/>
            <person name="Burute M."/>
            <person name="Haffner D."/>
        </authorList>
    </citation>
    <scope>FUNCTION</scope>
</reference>
<feature type="signal peptide" evidence="3">
    <location>
        <begin position="1"/>
        <end position="22"/>
    </location>
</feature>
<feature type="chain" id="PRO_5003163621" description="Fibrocystin" evidence="3">
    <location>
        <begin position="23"/>
        <end position="4074"/>
    </location>
</feature>
<feature type="transmembrane region" description="Helical" evidence="3">
    <location>
        <begin position="3854"/>
        <end position="3874"/>
    </location>
</feature>
<feature type="domain" description="IPT/TIG 1" evidence="3">
    <location>
        <begin position="258"/>
        <end position="310"/>
    </location>
</feature>
<feature type="domain" description="PA14" evidence="6">
    <location>
        <begin position="323"/>
        <end position="483"/>
    </location>
</feature>
<feature type="domain" description="IPT/TIG 2" evidence="3">
    <location>
        <begin position="944"/>
        <end position="1000"/>
    </location>
</feature>
<feature type="domain" description="IPT/TIG 3" evidence="3">
    <location>
        <begin position="1018"/>
        <end position="1101"/>
    </location>
</feature>
<feature type="domain" description="IPT/TIG 4" evidence="3">
    <location>
        <begin position="1107"/>
        <end position="1186"/>
    </location>
</feature>
<feature type="domain" description="IPT/TIG 5" evidence="3">
    <location>
        <begin position="1199"/>
        <end position="1274"/>
    </location>
</feature>
<feature type="domain" description="IPT/TIG 6" evidence="3">
    <location>
        <begin position="1385"/>
        <end position="1464"/>
    </location>
</feature>
<feature type="domain" description="IPT/TIG 7" evidence="3">
    <location>
        <begin position="1573"/>
        <end position="1641"/>
    </location>
</feature>
<feature type="domain" description="G8 1" evidence="5">
    <location>
        <begin position="1928"/>
        <end position="2049"/>
    </location>
</feature>
<feature type="repeat" description="PbH1 1" evidence="3">
    <location>
        <begin position="2245"/>
        <end position="2267"/>
    </location>
</feature>
<feature type="repeat" description="PbH1 2" evidence="3">
    <location>
        <begin position="2288"/>
        <end position="2322"/>
    </location>
</feature>
<feature type="repeat" description="PbH1 3" evidence="3">
    <location>
        <begin position="2351"/>
        <end position="2373"/>
    </location>
</feature>
<feature type="repeat" description="PbH1 4" evidence="3">
    <location>
        <begin position="2383"/>
        <end position="2404"/>
    </location>
</feature>
<feature type="repeat" description="PbH1 5" evidence="3">
    <location>
        <begin position="2405"/>
        <end position="2427"/>
    </location>
</feature>
<feature type="repeat" description="PbH1 6" evidence="3">
    <location>
        <begin position="2460"/>
        <end position="2483"/>
    </location>
</feature>
<feature type="domain" description="G8 2" evidence="5">
    <location>
        <begin position="2743"/>
        <end position="2869"/>
    </location>
</feature>
<feature type="repeat" description="PbH1 7" evidence="3">
    <location>
        <begin position="3029"/>
        <end position="3051"/>
    </location>
</feature>
<feature type="repeat" description="PbH1 8" evidence="3">
    <location>
        <begin position="3082"/>
        <end position="3104"/>
    </location>
</feature>
<feature type="repeat" description="PbH1 9" evidence="3">
    <location>
        <begin position="3158"/>
        <end position="3183"/>
    </location>
</feature>
<feature type="region of interest" description="Ciliary targeting sequence (CST)" evidence="1">
    <location>
        <begin position="3871"/>
        <end position="3888"/>
    </location>
</feature>
<feature type="region of interest" description="Disordered" evidence="7">
    <location>
        <begin position="3896"/>
        <end position="3919"/>
    </location>
</feature>
<feature type="region of interest" description="Disordered" evidence="7">
    <location>
        <begin position="3943"/>
        <end position="3965"/>
    </location>
</feature>
<feature type="region of interest" description="Nuclear localization signal (NLS)" evidence="1">
    <location>
        <begin position="3947"/>
        <end position="3976"/>
    </location>
</feature>
<feature type="region of interest" description="Disordered" evidence="7">
    <location>
        <begin position="4031"/>
        <end position="4074"/>
    </location>
</feature>
<feature type="compositionally biased region" description="Basic and acidic residues" evidence="7">
    <location>
        <begin position="3910"/>
        <end position="3919"/>
    </location>
</feature>
<feature type="compositionally biased region" description="Basic and acidic residues" evidence="7">
    <location>
        <begin position="3954"/>
        <end position="3965"/>
    </location>
</feature>
<feature type="site" description="Cleavage" evidence="2">
    <location>
        <begin position="3616"/>
        <end position="3617"/>
    </location>
</feature>
<feature type="glycosylation site" description="N-linked (GlcNAc...) asparagine" evidence="4">
    <location>
        <position position="54"/>
    </location>
</feature>
<feature type="glycosylation site" description="N-linked (GlcNAc...) asparagine" evidence="4">
    <location>
        <position position="224"/>
    </location>
</feature>
<feature type="glycosylation site" description="N-linked (GlcNAc...) asparagine" evidence="4">
    <location>
        <position position="355"/>
    </location>
</feature>
<feature type="glycosylation site" description="N-linked (GlcNAc...) asparagine" evidence="4">
    <location>
        <position position="385"/>
    </location>
</feature>
<feature type="glycosylation site" description="N-linked (GlcNAc...) asparagine" evidence="4">
    <location>
        <position position="518"/>
    </location>
</feature>
<feature type="glycosylation site" description="N-linked (GlcNAc...) asparagine" evidence="4">
    <location>
        <position position="527"/>
    </location>
</feature>
<feature type="glycosylation site" description="N-linked (GlcNAc...) asparagine" evidence="4">
    <location>
        <position position="640"/>
    </location>
</feature>
<feature type="glycosylation site" description="N-linked (GlcNAc...) asparagine" evidence="4">
    <location>
        <position position="710"/>
    </location>
</feature>
<feature type="glycosylation site" description="N-linked (GlcNAc...) asparagine" evidence="4">
    <location>
        <position position="741"/>
    </location>
</feature>
<feature type="glycosylation site" description="N-linked (GlcNAc...) asparagine" evidence="4">
    <location>
        <position position="822"/>
    </location>
</feature>
<feature type="glycosylation site" description="N-linked (GlcNAc...) asparagine" evidence="4">
    <location>
        <position position="829"/>
    </location>
</feature>
<feature type="glycosylation site" description="N-linked (GlcNAc...) asparagine" evidence="4">
    <location>
        <position position="868"/>
    </location>
</feature>
<feature type="glycosylation site" description="N-linked (GlcNAc...) asparagine" evidence="4">
    <location>
        <position position="953"/>
    </location>
</feature>
<feature type="glycosylation site" description="N-linked (GlcNAc...) asparagine" evidence="4">
    <location>
        <position position="966"/>
    </location>
</feature>
<feature type="glycosylation site" description="N-linked (GlcNAc...) asparagine" evidence="4">
    <location>
        <position position="976"/>
    </location>
</feature>
<feature type="glycosylation site" description="N-linked (GlcNAc...) asparagine" evidence="4">
    <location>
        <position position="1006"/>
    </location>
</feature>
<feature type="glycosylation site" description="N-linked (GlcNAc...) asparagine" evidence="4">
    <location>
        <position position="1059"/>
    </location>
</feature>
<feature type="glycosylation site" description="N-linked (GlcNAc...) asparagine" evidence="4">
    <location>
        <position position="1083"/>
    </location>
</feature>
<feature type="glycosylation site" description="N-linked (GlcNAc...) asparagine" evidence="4">
    <location>
        <position position="1115"/>
    </location>
</feature>
<feature type="glycosylation site" description="N-linked (GlcNAc...) asparagine" evidence="4">
    <location>
        <position position="1134"/>
    </location>
</feature>
<feature type="glycosylation site" description="N-linked (GlcNAc...) asparagine" evidence="4">
    <location>
        <position position="1233"/>
    </location>
</feature>
<feature type="glycosylation site" description="N-linked (GlcNAc...) asparagine" evidence="4">
    <location>
        <position position="1240"/>
    </location>
</feature>
<feature type="glycosylation site" description="N-linked (GlcNAc...) asparagine" evidence="4">
    <location>
        <position position="1274"/>
    </location>
</feature>
<feature type="glycosylation site" description="N-linked (GlcNAc...) asparagine" evidence="4">
    <location>
        <position position="1284"/>
    </location>
</feature>
<feature type="glycosylation site" description="N-linked (GlcNAc...) asparagine" evidence="4">
    <location>
        <position position="1308"/>
    </location>
</feature>
<feature type="glycosylation site" description="N-linked (GlcNAc...) asparagine" evidence="4">
    <location>
        <position position="1319"/>
    </location>
</feature>
<feature type="glycosylation site" description="N-linked (GlcNAc...) asparagine" evidence="4">
    <location>
        <position position="1342"/>
    </location>
</feature>
<feature type="glycosylation site" description="N-linked (GlcNAc...) asparagine" evidence="4">
    <location>
        <position position="1373"/>
    </location>
</feature>
<feature type="glycosylation site" description="N-linked (GlcNAc...) asparagine" evidence="4">
    <location>
        <position position="1445"/>
    </location>
</feature>
<feature type="glycosylation site" description="N-linked (GlcNAc...) asparagine" evidence="4">
    <location>
        <position position="1456"/>
    </location>
</feature>
<feature type="glycosylation site" description="N-linked (GlcNAc...) asparagine" evidence="4">
    <location>
        <position position="1471"/>
    </location>
</feature>
<feature type="glycosylation site" description="N-linked (GlcNAc...) asparagine" evidence="4">
    <location>
        <position position="1490"/>
    </location>
</feature>
<feature type="glycosylation site" description="N-linked (GlcNAc...) asparagine" evidence="4">
    <location>
        <position position="1528"/>
    </location>
</feature>
<feature type="glycosylation site" description="N-linked (GlcNAc...) asparagine" evidence="4">
    <location>
        <position position="1560"/>
    </location>
</feature>
<feature type="glycosylation site" description="N-linked (GlcNAc...) asparagine" evidence="4">
    <location>
        <position position="1578"/>
    </location>
</feature>
<feature type="glycosylation site" description="N-linked (GlcNAc...) asparagine" evidence="4">
    <location>
        <position position="1598"/>
    </location>
</feature>
<feature type="glycosylation site" description="N-linked (GlcNAc...) asparagine" evidence="4">
    <location>
        <position position="1627"/>
    </location>
</feature>
<feature type="glycosylation site" description="N-linked (GlcNAc...) asparagine" evidence="4">
    <location>
        <position position="1694"/>
    </location>
</feature>
<feature type="glycosylation site" description="N-linked (GlcNAc...) asparagine" evidence="4">
    <location>
        <position position="1760"/>
    </location>
</feature>
<feature type="glycosylation site" description="N-linked (GlcNAc...) asparagine" evidence="4">
    <location>
        <position position="1775"/>
    </location>
</feature>
<feature type="glycosylation site" description="N-linked (GlcNAc...) asparagine" evidence="4">
    <location>
        <position position="1789"/>
    </location>
</feature>
<feature type="glycosylation site" description="N-linked (GlcNAc...) asparagine" evidence="4">
    <location>
        <position position="1875"/>
    </location>
</feature>
<feature type="glycosylation site" description="N-linked (GlcNAc...) asparagine" evidence="4">
    <location>
        <position position="1915"/>
    </location>
</feature>
<feature type="glycosylation site" description="N-linked (GlcNAc...) asparagine" evidence="4">
    <location>
        <position position="1941"/>
    </location>
</feature>
<feature type="glycosylation site" description="N-linked (GlcNAc...) asparagine" evidence="4">
    <location>
        <position position="1955"/>
    </location>
</feature>
<feature type="glycosylation site" description="N-linked (GlcNAc...) asparagine" evidence="4">
    <location>
        <position position="2030"/>
    </location>
</feature>
<feature type="glycosylation site" description="N-linked (GlcNAc...) asparagine" evidence="4">
    <location>
        <position position="2111"/>
    </location>
</feature>
<feature type="glycosylation site" description="N-linked (GlcNAc...) asparagine" evidence="4">
    <location>
        <position position="2140"/>
    </location>
</feature>
<feature type="glycosylation site" description="N-linked (GlcNAc...) asparagine" evidence="4">
    <location>
        <position position="2390"/>
    </location>
</feature>
<feature type="glycosylation site" description="N-linked (GlcNAc...) asparagine" evidence="4">
    <location>
        <position position="2431"/>
    </location>
</feature>
<feature type="glycosylation site" description="N-linked (GlcNAc...) asparagine" evidence="4">
    <location>
        <position position="2467"/>
    </location>
</feature>
<feature type="glycosylation site" description="N-linked (GlcNAc...) asparagine" evidence="4">
    <location>
        <position position="2531"/>
    </location>
</feature>
<feature type="glycosylation site" description="N-linked (GlcNAc...) asparagine" evidence="4">
    <location>
        <position position="2549"/>
    </location>
</feature>
<feature type="glycosylation site" description="N-linked (GlcNAc...) asparagine" evidence="4">
    <location>
        <position position="2579"/>
    </location>
</feature>
<feature type="glycosylation site" description="N-linked (GlcNAc...) asparagine" evidence="4">
    <location>
        <position position="2591"/>
    </location>
</feature>
<feature type="glycosylation site" description="N-linked (GlcNAc...) asparagine" evidence="4">
    <location>
        <position position="2749"/>
    </location>
</feature>
<feature type="glycosylation site" description="N-linked (GlcNAc...) asparagine" evidence="4">
    <location>
        <position position="2764"/>
    </location>
</feature>
<feature type="glycosylation site" description="N-linked (GlcNAc...) asparagine" evidence="4">
    <location>
        <position position="2972"/>
    </location>
</feature>
<feature type="glycosylation site" description="N-linked (GlcNAc...) asparagine" evidence="4">
    <location>
        <position position="3004"/>
    </location>
</feature>
<feature type="glycosylation site" description="N-linked (GlcNAc...) asparagine" evidence="4">
    <location>
        <position position="3053"/>
    </location>
</feature>
<feature type="glycosylation site" description="N-linked (GlcNAc...) asparagine" evidence="4">
    <location>
        <position position="3136"/>
    </location>
</feature>
<feature type="glycosylation site" description="N-linked (GlcNAc...) asparagine" evidence="4">
    <location>
        <position position="3165"/>
    </location>
</feature>
<feature type="glycosylation site" description="N-linked (GlcNAc...) asparagine" evidence="4">
    <location>
        <position position="3221"/>
    </location>
</feature>
<feature type="glycosylation site" description="N-linked (GlcNAc...) asparagine" evidence="4">
    <location>
        <position position="3484"/>
    </location>
</feature>
<feature type="glycosylation site" description="N-linked (GlcNAc...) asparagine" evidence="4">
    <location>
        <position position="3702"/>
    </location>
</feature>
<feature type="glycosylation site" description="N-linked (GlcNAc...) asparagine" evidence="4">
    <location>
        <position position="3721"/>
    </location>
</feature>
<feature type="glycosylation site" description="N-linked (GlcNAc...) asparagine" evidence="4">
    <location>
        <position position="3833"/>
    </location>
</feature>
<protein>
    <recommendedName>
        <fullName evidence="2">Fibrocystin</fullName>
    </recommendedName>
    <alternativeName>
        <fullName>Polycystic kidney and hepatic disease 1 protein</fullName>
    </alternativeName>
    <alternativeName>
        <fullName>Polyductin</fullName>
    </alternativeName>
</protein>